<sequence>MNFELKTLSLAAAAAYKCDLLVVLVPEGFLPGSDVLSTLTAHALKQGDLEVKPGKLLQCYAPAGVAARRVVLLGCGAADAHAVRQAMQALAPSFKLPSVKRVALVFGTSAQRGAIGAAVRAVSDGSYVYTATKTKAEPRALLRVTLGVPDAGAAQPEFATATAVAAGVEFAREWANRPANHATPTLVANAAKTLAKYPGVQCQVLGPTEVAKLGMGAFLAVAQGSDQPLRLVELRYNGAARTQAPVVLVGKGITFDTGGISLKPAAEMDEMKFDMGGAASVLGVFRALAELRPAINVVGLIPACENMPDGKAVKPGDVVTSMSGQTIEILNTDAEGRLVLCDALTYAARFKPAAVVDIATLTGACVVALGGLRSGLFASDDLLAEQLLSAGDAALDPCWRMPLDDEYAEGLKSNFADMANVAGRAGGSITAAKFLQRFVGDTPWAHLDIAGTAWKGGAAKGATGRPVGLLVHYLLERATVSTVKPKQKTRSRKSVA</sequence>
<accession>B9MJ44</accession>
<proteinExistence type="inferred from homology"/>
<reference key="1">
    <citation type="submission" date="2009-01" db="EMBL/GenBank/DDBJ databases">
        <title>Complete sequence of Diaphorobacter sp. TPSY.</title>
        <authorList>
            <consortium name="US DOE Joint Genome Institute"/>
            <person name="Lucas S."/>
            <person name="Copeland A."/>
            <person name="Lapidus A."/>
            <person name="Glavina del Rio T."/>
            <person name="Tice H."/>
            <person name="Bruce D."/>
            <person name="Goodwin L."/>
            <person name="Pitluck S."/>
            <person name="Chertkov O."/>
            <person name="Brettin T."/>
            <person name="Detter J.C."/>
            <person name="Han C."/>
            <person name="Larimer F."/>
            <person name="Land M."/>
            <person name="Hauser L."/>
            <person name="Kyrpides N."/>
            <person name="Mikhailova N."/>
            <person name="Coates J.D."/>
        </authorList>
    </citation>
    <scope>NUCLEOTIDE SEQUENCE [LARGE SCALE GENOMIC DNA]</scope>
    <source>
        <strain>TPSY</strain>
    </source>
</reference>
<comment type="function">
    <text evidence="1">Presumably involved in the processing and regular turnover of intracellular proteins. Catalyzes the removal of unsubstituted N-terminal amino acids from various peptides.</text>
</comment>
<comment type="catalytic activity">
    <reaction evidence="1">
        <text>Release of an N-terminal amino acid, Xaa-|-Yaa-, in which Xaa is preferably Leu, but may be other amino acids including Pro although not Arg or Lys, and Yaa may be Pro. Amino acid amides and methyl esters are also readily hydrolyzed, but rates on arylamides are exceedingly low.</text>
        <dbReference type="EC" id="3.4.11.1"/>
    </reaction>
</comment>
<comment type="catalytic activity">
    <reaction evidence="1">
        <text>Release of an N-terminal amino acid, preferentially leucine, but not glutamic or aspartic acids.</text>
        <dbReference type="EC" id="3.4.11.10"/>
    </reaction>
</comment>
<comment type="cofactor">
    <cofactor evidence="1">
        <name>Mn(2+)</name>
        <dbReference type="ChEBI" id="CHEBI:29035"/>
    </cofactor>
    <text evidence="1">Binds 2 manganese ions per subunit.</text>
</comment>
<comment type="subcellular location">
    <subcellularLocation>
        <location evidence="1">Cytoplasm</location>
    </subcellularLocation>
</comment>
<comment type="similarity">
    <text evidence="1">Belongs to the peptidase M17 family.</text>
</comment>
<name>AMPA_ACIET</name>
<keyword id="KW-0031">Aminopeptidase</keyword>
<keyword id="KW-0963">Cytoplasm</keyword>
<keyword id="KW-0378">Hydrolase</keyword>
<keyword id="KW-0464">Manganese</keyword>
<keyword id="KW-0479">Metal-binding</keyword>
<keyword id="KW-0645">Protease</keyword>
<keyword id="KW-1185">Reference proteome</keyword>
<evidence type="ECO:0000255" key="1">
    <source>
        <dbReference type="HAMAP-Rule" id="MF_00181"/>
    </source>
</evidence>
<gene>
    <name evidence="1" type="primary">pepA</name>
    <name type="ordered locus">Dtpsy_1725</name>
</gene>
<organism>
    <name type="scientific">Acidovorax ebreus (strain TPSY)</name>
    <name type="common">Diaphorobacter sp. (strain TPSY)</name>
    <dbReference type="NCBI Taxonomy" id="535289"/>
    <lineage>
        <taxon>Bacteria</taxon>
        <taxon>Pseudomonadati</taxon>
        <taxon>Pseudomonadota</taxon>
        <taxon>Betaproteobacteria</taxon>
        <taxon>Burkholderiales</taxon>
        <taxon>Comamonadaceae</taxon>
        <taxon>Diaphorobacter</taxon>
    </lineage>
</organism>
<feature type="chain" id="PRO_1000192711" description="Probable cytosol aminopeptidase">
    <location>
        <begin position="1"/>
        <end position="496"/>
    </location>
</feature>
<feature type="active site" evidence="1">
    <location>
        <position position="263"/>
    </location>
</feature>
<feature type="active site" evidence="1">
    <location>
        <position position="337"/>
    </location>
</feature>
<feature type="binding site" evidence="1">
    <location>
        <position position="251"/>
    </location>
    <ligand>
        <name>Mn(2+)</name>
        <dbReference type="ChEBI" id="CHEBI:29035"/>
        <label>2</label>
    </ligand>
</feature>
<feature type="binding site" evidence="1">
    <location>
        <position position="256"/>
    </location>
    <ligand>
        <name>Mn(2+)</name>
        <dbReference type="ChEBI" id="CHEBI:29035"/>
        <label>1</label>
    </ligand>
</feature>
<feature type="binding site" evidence="1">
    <location>
        <position position="256"/>
    </location>
    <ligand>
        <name>Mn(2+)</name>
        <dbReference type="ChEBI" id="CHEBI:29035"/>
        <label>2</label>
    </ligand>
</feature>
<feature type="binding site" evidence="1">
    <location>
        <position position="274"/>
    </location>
    <ligand>
        <name>Mn(2+)</name>
        <dbReference type="ChEBI" id="CHEBI:29035"/>
        <label>2</label>
    </ligand>
</feature>
<feature type="binding site" evidence="1">
    <location>
        <position position="333"/>
    </location>
    <ligand>
        <name>Mn(2+)</name>
        <dbReference type="ChEBI" id="CHEBI:29035"/>
        <label>1</label>
    </ligand>
</feature>
<feature type="binding site" evidence="1">
    <location>
        <position position="335"/>
    </location>
    <ligand>
        <name>Mn(2+)</name>
        <dbReference type="ChEBI" id="CHEBI:29035"/>
        <label>1</label>
    </ligand>
</feature>
<feature type="binding site" evidence="1">
    <location>
        <position position="335"/>
    </location>
    <ligand>
        <name>Mn(2+)</name>
        <dbReference type="ChEBI" id="CHEBI:29035"/>
        <label>2</label>
    </ligand>
</feature>
<protein>
    <recommendedName>
        <fullName evidence="1">Probable cytosol aminopeptidase</fullName>
        <ecNumber evidence="1">3.4.11.1</ecNumber>
    </recommendedName>
    <alternativeName>
        <fullName evidence="1">Leucine aminopeptidase</fullName>
        <shortName evidence="1">LAP</shortName>
        <ecNumber evidence="1">3.4.11.10</ecNumber>
    </alternativeName>
    <alternativeName>
        <fullName evidence="1">Leucyl aminopeptidase</fullName>
    </alternativeName>
</protein>
<dbReference type="EC" id="3.4.11.1" evidence="1"/>
<dbReference type="EC" id="3.4.11.10" evidence="1"/>
<dbReference type="EMBL" id="CP001392">
    <property type="protein sequence ID" value="ACM33182.1"/>
    <property type="molecule type" value="Genomic_DNA"/>
</dbReference>
<dbReference type="RefSeq" id="WP_015913267.1">
    <property type="nucleotide sequence ID" value="NC_011992.1"/>
</dbReference>
<dbReference type="SMR" id="B9MJ44"/>
<dbReference type="MEROPS" id="M17.003"/>
<dbReference type="KEGG" id="dia:Dtpsy_1725"/>
<dbReference type="eggNOG" id="COG0260">
    <property type="taxonomic scope" value="Bacteria"/>
</dbReference>
<dbReference type="HOGENOM" id="CLU_013734_2_2_4"/>
<dbReference type="Proteomes" id="UP000000450">
    <property type="component" value="Chromosome"/>
</dbReference>
<dbReference type="GO" id="GO:0005737">
    <property type="term" value="C:cytoplasm"/>
    <property type="evidence" value="ECO:0007669"/>
    <property type="project" value="UniProtKB-SubCell"/>
</dbReference>
<dbReference type="GO" id="GO:0030145">
    <property type="term" value="F:manganese ion binding"/>
    <property type="evidence" value="ECO:0007669"/>
    <property type="project" value="UniProtKB-UniRule"/>
</dbReference>
<dbReference type="GO" id="GO:0070006">
    <property type="term" value="F:metalloaminopeptidase activity"/>
    <property type="evidence" value="ECO:0007669"/>
    <property type="project" value="InterPro"/>
</dbReference>
<dbReference type="GO" id="GO:0006508">
    <property type="term" value="P:proteolysis"/>
    <property type="evidence" value="ECO:0007669"/>
    <property type="project" value="UniProtKB-KW"/>
</dbReference>
<dbReference type="CDD" id="cd00433">
    <property type="entry name" value="Peptidase_M17"/>
    <property type="match status" value="1"/>
</dbReference>
<dbReference type="Gene3D" id="3.40.220.10">
    <property type="entry name" value="Leucine Aminopeptidase, subunit E, domain 1"/>
    <property type="match status" value="1"/>
</dbReference>
<dbReference type="Gene3D" id="3.40.630.10">
    <property type="entry name" value="Zn peptidases"/>
    <property type="match status" value="1"/>
</dbReference>
<dbReference type="HAMAP" id="MF_00181">
    <property type="entry name" value="Cytosol_peptidase_M17"/>
    <property type="match status" value="1"/>
</dbReference>
<dbReference type="InterPro" id="IPR011356">
    <property type="entry name" value="Leucine_aapep/pepB"/>
</dbReference>
<dbReference type="InterPro" id="IPR043472">
    <property type="entry name" value="Macro_dom-like"/>
</dbReference>
<dbReference type="InterPro" id="IPR000819">
    <property type="entry name" value="Peptidase_M17_C"/>
</dbReference>
<dbReference type="InterPro" id="IPR023042">
    <property type="entry name" value="Peptidase_M17_leu_NH2_pept"/>
</dbReference>
<dbReference type="InterPro" id="IPR008283">
    <property type="entry name" value="Peptidase_M17_N"/>
</dbReference>
<dbReference type="NCBIfam" id="NF002074">
    <property type="entry name" value="PRK00913.1-4"/>
    <property type="match status" value="1"/>
</dbReference>
<dbReference type="NCBIfam" id="NF002077">
    <property type="entry name" value="PRK00913.2-4"/>
    <property type="match status" value="1"/>
</dbReference>
<dbReference type="PANTHER" id="PTHR11963:SF23">
    <property type="entry name" value="CYTOSOL AMINOPEPTIDASE"/>
    <property type="match status" value="1"/>
</dbReference>
<dbReference type="PANTHER" id="PTHR11963">
    <property type="entry name" value="LEUCINE AMINOPEPTIDASE-RELATED"/>
    <property type="match status" value="1"/>
</dbReference>
<dbReference type="Pfam" id="PF00883">
    <property type="entry name" value="Peptidase_M17"/>
    <property type="match status" value="1"/>
</dbReference>
<dbReference type="Pfam" id="PF02789">
    <property type="entry name" value="Peptidase_M17_N"/>
    <property type="match status" value="1"/>
</dbReference>
<dbReference type="PRINTS" id="PR00481">
    <property type="entry name" value="LAMNOPPTDASE"/>
</dbReference>
<dbReference type="SUPFAM" id="SSF52949">
    <property type="entry name" value="Macro domain-like"/>
    <property type="match status" value="1"/>
</dbReference>
<dbReference type="SUPFAM" id="SSF53187">
    <property type="entry name" value="Zn-dependent exopeptidases"/>
    <property type="match status" value="1"/>
</dbReference>
<dbReference type="PROSITE" id="PS00631">
    <property type="entry name" value="CYTOSOL_AP"/>
    <property type="match status" value="1"/>
</dbReference>